<gene>
    <name type="primary">SIR</name>
</gene>
<feature type="transit peptide" description="Chloroplast" evidence="1">
    <location>
        <begin position="1"/>
        <end position="50"/>
    </location>
</feature>
<feature type="chain" id="PRO_5000139992" description="Sulfite reductase [ferredoxin], chloroplastic">
    <location>
        <begin position="51"/>
        <end position="635"/>
    </location>
</feature>
<feature type="region of interest" description="Disordered" evidence="2">
    <location>
        <begin position="31"/>
        <end position="50"/>
    </location>
</feature>
<feature type="region of interest" description="Disordered" evidence="2">
    <location>
        <begin position="245"/>
        <end position="267"/>
    </location>
</feature>
<feature type="compositionally biased region" description="Basic and acidic residues" evidence="2">
    <location>
        <begin position="245"/>
        <end position="254"/>
    </location>
</feature>
<feature type="binding site" evidence="1">
    <location>
        <position position="494"/>
    </location>
    <ligand>
        <name>[4Fe-4S] cluster</name>
        <dbReference type="ChEBI" id="CHEBI:49883"/>
    </ligand>
</feature>
<feature type="binding site" evidence="1">
    <location>
        <position position="500"/>
    </location>
    <ligand>
        <name>[4Fe-4S] cluster</name>
        <dbReference type="ChEBI" id="CHEBI:49883"/>
    </ligand>
</feature>
<feature type="binding site" evidence="1">
    <location>
        <position position="540"/>
    </location>
    <ligand>
        <name>[4Fe-4S] cluster</name>
        <dbReference type="ChEBI" id="CHEBI:49883"/>
    </ligand>
</feature>
<feature type="binding site" evidence="1">
    <location>
        <position position="544"/>
    </location>
    <ligand>
        <name>[4Fe-4S] cluster</name>
        <dbReference type="ChEBI" id="CHEBI:49883"/>
    </ligand>
</feature>
<feature type="binding site" description="axial binding residue" evidence="1">
    <location>
        <position position="544"/>
    </location>
    <ligand>
        <name>siroheme</name>
        <dbReference type="ChEBI" id="CHEBI:60052"/>
    </ligand>
    <ligandPart>
        <name>Fe</name>
        <dbReference type="ChEBI" id="CHEBI:18248"/>
    </ligandPart>
</feature>
<feature type="mutagenesis site" description="Loss of sulfite reductase activity, low nitrite reductase activity and reduced siroheme redox potential." evidence="5 7">
    <original>R</original>
    <variation>A</variation>
    <location>
        <position position="193"/>
    </location>
</feature>
<feature type="mutagenesis site" description="Loss of sulfite reductase activity, increased nitrite reductase activity and reduced siroheme redox potential." evidence="5 7">
    <original>R</original>
    <variation>E</variation>
    <location>
        <position position="193"/>
    </location>
</feature>
<feature type="mutagenesis site" description="Loss of sulfite reductase activity, no nitrite reductase activity." evidence="5">
    <original>K</original>
    <variation>Q</variation>
    <location>
        <position position="276"/>
    </location>
</feature>
<feature type="mutagenesis site" description="Loss of sulfite reductase activity, basal nitrite reductase activity." evidence="5">
    <original>K</original>
    <variation>N</variation>
    <location>
        <position position="278"/>
    </location>
</feature>
<feature type="helix" evidence="13">
    <location>
        <begin position="66"/>
        <end position="72"/>
    </location>
</feature>
<feature type="turn" evidence="13">
    <location>
        <begin position="75"/>
        <end position="80"/>
    </location>
</feature>
<feature type="helix" evidence="13">
    <location>
        <begin position="81"/>
        <end position="84"/>
    </location>
</feature>
<feature type="strand" evidence="13">
    <location>
        <begin position="87"/>
        <end position="91"/>
    </location>
</feature>
<feature type="helix" evidence="13">
    <location>
        <begin position="94"/>
        <end position="100"/>
    </location>
</feature>
<feature type="helix" evidence="13">
    <location>
        <begin position="101"/>
        <end position="103"/>
    </location>
</feature>
<feature type="strand" evidence="13">
    <location>
        <begin position="105"/>
        <end position="109"/>
    </location>
</feature>
<feature type="strand" evidence="12">
    <location>
        <begin position="111"/>
        <end position="113"/>
    </location>
</feature>
<feature type="strand" evidence="13">
    <location>
        <begin position="119"/>
        <end position="124"/>
    </location>
</feature>
<feature type="helix" evidence="13">
    <location>
        <begin position="128"/>
        <end position="130"/>
    </location>
</feature>
<feature type="helix" evidence="13">
    <location>
        <begin position="134"/>
        <end position="147"/>
    </location>
</feature>
<feature type="strand" evidence="13">
    <location>
        <begin position="148"/>
        <end position="150"/>
    </location>
</feature>
<feature type="strand" evidence="13">
    <location>
        <begin position="152"/>
        <end position="154"/>
    </location>
</feature>
<feature type="strand" evidence="13">
    <location>
        <begin position="160"/>
        <end position="165"/>
    </location>
</feature>
<feature type="helix" evidence="13">
    <location>
        <begin position="167"/>
        <end position="169"/>
    </location>
</feature>
<feature type="helix" evidence="13">
    <location>
        <begin position="170"/>
        <end position="178"/>
    </location>
</feature>
<feature type="turn" evidence="13">
    <location>
        <begin position="179"/>
        <end position="181"/>
    </location>
</feature>
<feature type="strand" evidence="13">
    <location>
        <begin position="187"/>
        <end position="192"/>
    </location>
</feature>
<feature type="helix" evidence="13">
    <location>
        <begin position="205"/>
        <end position="220"/>
    </location>
</feature>
<feature type="helix" evidence="13">
    <location>
        <begin position="227"/>
        <end position="232"/>
    </location>
</feature>
<feature type="helix" evidence="13">
    <location>
        <begin position="245"/>
        <end position="252"/>
    </location>
</feature>
<feature type="strand" evidence="13">
    <location>
        <begin position="263"/>
        <end position="265"/>
    </location>
</feature>
<feature type="turn" evidence="13">
    <location>
        <begin position="266"/>
        <end position="268"/>
    </location>
</feature>
<feature type="strand" evidence="13">
    <location>
        <begin position="279"/>
        <end position="283"/>
    </location>
</feature>
<feature type="helix" evidence="13">
    <location>
        <begin position="291"/>
        <end position="293"/>
    </location>
</feature>
<feature type="strand" evidence="13">
    <location>
        <begin position="294"/>
        <end position="302"/>
    </location>
</feature>
<feature type="strand" evidence="13">
    <location>
        <begin position="308"/>
        <end position="315"/>
    </location>
</feature>
<feature type="strand" evidence="13">
    <location>
        <begin position="334"/>
        <end position="340"/>
    </location>
</feature>
<feature type="helix" evidence="13">
    <location>
        <begin position="341"/>
        <end position="343"/>
    </location>
</feature>
<feature type="helix" evidence="13">
    <location>
        <begin position="344"/>
        <end position="358"/>
    </location>
</feature>
<feature type="helix" evidence="13">
    <location>
        <begin position="364"/>
        <end position="366"/>
    </location>
</feature>
<feature type="helix" evidence="13">
    <location>
        <begin position="369"/>
        <end position="376"/>
    </location>
</feature>
<feature type="helix" evidence="13">
    <location>
        <begin position="378"/>
        <end position="389"/>
    </location>
</feature>
<feature type="strand" evidence="13">
    <location>
        <begin position="409"/>
        <end position="412"/>
    </location>
</feature>
<feature type="strand" evidence="13">
    <location>
        <begin position="414"/>
        <end position="416"/>
    </location>
</feature>
<feature type="strand" evidence="13">
    <location>
        <begin position="418"/>
        <end position="422"/>
    </location>
</feature>
<feature type="helix" evidence="13">
    <location>
        <begin position="425"/>
        <end position="427"/>
    </location>
</feature>
<feature type="helix" evidence="13">
    <location>
        <begin position="431"/>
        <end position="443"/>
    </location>
</feature>
<feature type="strand" evidence="13">
    <location>
        <begin position="448"/>
        <end position="450"/>
    </location>
</feature>
<feature type="strand" evidence="13">
    <location>
        <begin position="456"/>
        <end position="461"/>
    </location>
</feature>
<feature type="helix" evidence="13">
    <location>
        <begin position="463"/>
        <end position="465"/>
    </location>
</feature>
<feature type="helix" evidence="13">
    <location>
        <begin position="466"/>
        <end position="475"/>
    </location>
</feature>
<feature type="helix" evidence="13">
    <location>
        <begin position="481"/>
        <end position="483"/>
    </location>
</feature>
<feature type="helix" evidence="13">
    <location>
        <begin position="486"/>
        <end position="490"/>
    </location>
</feature>
<feature type="turn" evidence="13">
    <location>
        <begin position="497"/>
        <end position="499"/>
    </location>
</feature>
<feature type="helix" evidence="13">
    <location>
        <begin position="508"/>
        <end position="525"/>
    </location>
</feature>
<feature type="strand" evidence="13">
    <location>
        <begin position="535"/>
        <end position="540"/>
    </location>
</feature>
<feature type="helix" evidence="13">
    <location>
        <begin position="547"/>
        <end position="549"/>
    </location>
</feature>
<feature type="strand" evidence="13">
    <location>
        <begin position="550"/>
        <end position="558"/>
    </location>
</feature>
<feature type="strand" evidence="13">
    <location>
        <begin position="561"/>
        <end position="566"/>
    </location>
</feature>
<feature type="strand" evidence="13">
    <location>
        <begin position="577"/>
        <end position="584"/>
    </location>
</feature>
<feature type="helix" evidence="13">
    <location>
        <begin position="585"/>
        <end position="587"/>
    </location>
</feature>
<feature type="helix" evidence="13">
    <location>
        <begin position="588"/>
        <end position="602"/>
    </location>
</feature>
<feature type="helix" evidence="13">
    <location>
        <begin position="609"/>
        <end position="616"/>
    </location>
</feature>
<feature type="helix" evidence="13">
    <location>
        <begin position="618"/>
        <end position="628"/>
    </location>
</feature>
<organism>
    <name type="scientific">Zea mays</name>
    <name type="common">Maize</name>
    <dbReference type="NCBI Taxonomy" id="4577"/>
    <lineage>
        <taxon>Eukaryota</taxon>
        <taxon>Viridiplantae</taxon>
        <taxon>Streptophyta</taxon>
        <taxon>Embryophyta</taxon>
        <taxon>Tracheophyta</taxon>
        <taxon>Spermatophyta</taxon>
        <taxon>Magnoliopsida</taxon>
        <taxon>Liliopsida</taxon>
        <taxon>Poales</taxon>
        <taxon>Poaceae</taxon>
        <taxon>PACMAD clade</taxon>
        <taxon>Panicoideae</taxon>
        <taxon>Andropogonodae</taxon>
        <taxon>Andropogoneae</taxon>
        <taxon>Tripsacinae</taxon>
        <taxon>Zea</taxon>
    </lineage>
</organism>
<reference key="1">
    <citation type="book" date="1995" name="Research in Photosynthesis from Light to Biosphere II">
        <title>cDNA cloning and functional expression of ferredoxin-dependent sulfite reductase from maize in E. coli cells.</title>
        <editorList>
            <person name="Mathis P."/>
        </editorList>
        <authorList>
            <person name="Ideguchi T."/>
            <person name="Akashi T."/>
            <person name="Onda Y."/>
            <person name="Hase T."/>
        </authorList>
    </citation>
    <scope>NUCLEOTIDE SEQUENCE [MRNA]</scope>
    <source>
        <strain>cv. Golden cross Bantam T51</strain>
        <tissue>Leaf</tissue>
    </source>
</reference>
<reference key="2">
    <citation type="journal article" date="1984" name="Plant Physiol.">
        <title>Intercellular localization of assimilatory sulfate reduction in leaves of Zea mays and Triticum aestivum.</title>
        <authorList>
            <person name="Schmutz D."/>
            <person name="Brunold C."/>
        </authorList>
    </citation>
    <scope>TISSUE SPECIFICITY</scope>
</reference>
<reference key="3">
    <citation type="journal article" date="1999" name="J. Biol. Chem.">
        <title>Comparison of the electrostatic binding sites on the surface of ferredoxin for two ferredoxin-dependent enzymes, ferredoxin-NADP(+) reductase and sulfite reductase.</title>
        <authorList>
            <person name="Akashi T."/>
            <person name="Matsumura T."/>
            <person name="Ideguchi T."/>
            <person name="Iwakiri K."/>
            <person name="Kawakatsu T."/>
            <person name="Taniguchi I."/>
            <person name="Hase T."/>
        </authorList>
    </citation>
    <scope>CATALYTIC ACTIVITY</scope>
    <scope>BIOPHYSICOCHEMICAL PROPERTIES</scope>
    <scope>INTERACTION WITH FERREDOXIN</scope>
</reference>
<reference key="4">
    <citation type="journal article" date="2000" name="J. Inorg. Biochem.">
        <title>Plant sulfite reductase: molecular structure, catalytic function and interaction with ferredoxin.</title>
        <authorList>
            <person name="Nakayama M."/>
            <person name="Akashi T."/>
            <person name="Hase T."/>
        </authorList>
    </citation>
    <scope>MUTAGENESIS OF ARG-193; LYS-276 AND LYS-278</scope>
    <scope>BIOPHYSICOCHEMICAL PROPERTIES</scope>
    <scope>REVIEW</scope>
</reference>
<reference key="5">
    <citation type="journal article" date="2000" name="Plant Physiol.">
        <title>Analysis of reductant supply systems for ferredoxin-dependent sulfite reductase in photosynthetic and nonphotosynthetic organs of maize.</title>
        <authorList>
            <person name="Yonekura-Sakakibara K."/>
            <person name="Onda Y."/>
            <person name="Ashikari T."/>
            <person name="Tanaka Y."/>
            <person name="Kusumi T."/>
            <person name="Hase T."/>
        </authorList>
    </citation>
    <scope>FUNCTION</scope>
    <scope>CATALYTIC ACTIVITY</scope>
    <scope>SUBCELLULAR LOCATION</scope>
    <scope>TISSUE SPECIFICITY</scope>
    <source>
        <strain>cv. Golden cross Bantam T51</strain>
    </source>
</reference>
<reference key="6">
    <citation type="journal article" date="2001" name="FEBS Lett.">
        <title>The 70-kDa major DNA-compacting protein of the chloroplast nucleoid is sulfite reductase.</title>
        <authorList>
            <person name="Sato N."/>
            <person name="Nakayama M."/>
            <person name="Hase T."/>
        </authorList>
    </citation>
    <scope>FUNCTION</scope>
</reference>
<reference key="7">
    <citation type="journal article" date="2004" name="Biochim. Biophys. Acta">
        <title>Oxidation-reduction properties of maize ferredoxin: sulfite oxidoreductase.</title>
        <authorList>
            <person name="Hirasawa M."/>
            <person name="Nakayama M."/>
            <person name="Hase T."/>
            <person name="Knaff D.B."/>
        </authorList>
    </citation>
    <scope>FUNCTION</scope>
    <scope>MUTAGENESIS OF ARG-193</scope>
    <scope>BIOPHYSICOCHEMICAL PROPERTIES</scope>
</reference>
<reference key="8">
    <citation type="journal article" date="2005" name="Photosyn. Res.">
        <title>Chemical modification studies of tryptophan, arginine and lysine residues in maize chloroplast ferredoxin:sulfite oxidoreductase.</title>
        <authorList>
            <person name="Hirasawa M."/>
            <person name="Nakayama M."/>
            <person name="Kim S.-K."/>
            <person name="Hase T."/>
            <person name="Knaff D.B."/>
        </authorList>
    </citation>
    <scope>INHIBITORS</scope>
</reference>
<reference key="9">
    <citation type="journal article" date="2006" name="J. Biol. Chem.">
        <title>NMR study of the electron transfer complex of plant ferredoxin and sulfite reductase: mapping the interaction sites of ferredoxin.</title>
        <authorList>
            <person name="Saitoh T."/>
            <person name="Ikegami T."/>
            <person name="Nakayama M."/>
            <person name="Teshima K."/>
            <person name="Akutsu H."/>
            <person name="Hase T."/>
        </authorList>
    </citation>
    <scope>INTERACTION WITH FERREDOXIN</scope>
    <scope>BIOPHYSICOCHEMICAL PROPERTIES</scope>
</reference>
<reference key="10">
    <citation type="journal article" date="2007" name="FEBS J.">
        <title>DNA binding and partial nucleoid localization of the chloroplast stromal enzyme ferredoxin:sulfite reductase.</title>
        <authorList>
            <person name="Sekine K."/>
            <person name="Fujiwara M."/>
            <person name="Nakayama M."/>
            <person name="Takao T."/>
            <person name="Hase T."/>
            <person name="Sato N."/>
        </authorList>
    </citation>
    <scope>FUNCTION</scope>
    <scope>SUBCELLULAR LOCATION</scope>
</reference>
<name>SIR_MAIZE</name>
<proteinExistence type="evidence at protein level"/>
<accession>O23813</accession>
<comment type="function">
    <text evidence="4 6 7 10">Essential protein with sulfite reductase activity required in assimilatory sulfate reduction pathway during both primary and secondary metabolism and thus involved in development and growth.</text>
</comment>
<comment type="function">
    <text evidence="6">DNA-binding protein that binds to both double-stranded and single-stranded DNA without significant sequence specificity to reversibly repress the transcriptional activity of chloroplast nucleoids by promoting DNA compaction and possibly regulate DNA replication.</text>
</comment>
<comment type="catalytic activity">
    <reaction evidence="3 4">
        <text>hydrogen sulfide + 6 oxidized [2Fe-2S]-[ferredoxin] + 3 H2O = sulfite + 6 reduced [2Fe-2S]-[ferredoxin] + 7 H(+)</text>
        <dbReference type="Rhea" id="RHEA:23132"/>
        <dbReference type="Rhea" id="RHEA-COMP:10000"/>
        <dbReference type="Rhea" id="RHEA-COMP:10001"/>
        <dbReference type="ChEBI" id="CHEBI:15377"/>
        <dbReference type="ChEBI" id="CHEBI:15378"/>
        <dbReference type="ChEBI" id="CHEBI:17359"/>
        <dbReference type="ChEBI" id="CHEBI:29919"/>
        <dbReference type="ChEBI" id="CHEBI:33737"/>
        <dbReference type="ChEBI" id="CHEBI:33738"/>
        <dbReference type="EC" id="1.8.7.1"/>
    </reaction>
</comment>
<comment type="cofactor">
    <cofactor evidence="1">
        <name>siroheme</name>
        <dbReference type="ChEBI" id="CHEBI:60052"/>
    </cofactor>
    <text evidence="1">Binds 1 siroheme per subunit.</text>
</comment>
<comment type="cofactor">
    <cofactor>
        <name>[4Fe-4S] cluster</name>
        <dbReference type="ChEBI" id="CHEBI:49883"/>
    </cofactor>
    <text>Binds 1 [4Fe-4S] cluster per subunit.</text>
</comment>
<comment type="activity regulation">
    <text>Inhibited by the tryptophan-modifying reagent, N-bromosuccinimide (NBS), by the lysine-modifying reagent, N-acetylsuccinimide and by the arginine-modifying reagent, phenylglyoxal. Complex formation with ferredoxin prevents these inhibitions.</text>
</comment>
<comment type="biophysicochemical properties">
    <kinetics>
        <KM evidence="3 5 7 8">1.7 uM for ferredoxin</KM>
        <KM evidence="3 5 7 8">1 mM for nitrite</KM>
    </kinetics>
    <phDependence>
        <text evidence="3 5 7 8">Optimum pH is 7.5.</text>
    </phDependence>
    <redoxPotential>
        <text evidence="3 5 7 8">E is -285 +/- 5 mV for siroheme and -400 +/- 5 mV for 2Fe-2S at pH 7.5.</text>
    </redoxPotential>
</comment>
<comment type="subunit">
    <text evidence="1 3 8">Monomer (By similarity). Interacts with ferredoxin.</text>
</comment>
<comment type="subcellular location">
    <subcellularLocation>
        <location>Plastid</location>
        <location>Chloroplast stroma</location>
        <location>Chloroplast nucleoid</location>
    </subcellularLocation>
    <subcellularLocation>
        <location>Plastid</location>
        <location>Chloroplast stroma</location>
    </subcellularLocation>
    <subcellularLocation>
        <location>Plastid stroma</location>
    </subcellularLocation>
</comment>
<comment type="tissue specificity">
    <text evidence="4 9">Present in roots and leaves (at protein level). In leaves, sulfite reductase activity is detected in both bundle sheath and mesophyll cell types.</text>
</comment>
<comment type="PTM">
    <text evidence="1">Phosphorylated; this phosphorylation reduces DNA-binding.</text>
</comment>
<comment type="similarity">
    <text evidence="11">Belongs to the nitrite and sulfite reductase 4Fe-4S domain family.</text>
</comment>
<evidence type="ECO:0000250" key="1"/>
<evidence type="ECO:0000256" key="2">
    <source>
        <dbReference type="SAM" id="MobiDB-lite"/>
    </source>
</evidence>
<evidence type="ECO:0000269" key="3">
    <source>
    </source>
</evidence>
<evidence type="ECO:0000269" key="4">
    <source>
    </source>
</evidence>
<evidence type="ECO:0000269" key="5">
    <source>
    </source>
</evidence>
<evidence type="ECO:0000269" key="6">
    <source>
    </source>
</evidence>
<evidence type="ECO:0000269" key="7">
    <source>
    </source>
</evidence>
<evidence type="ECO:0000269" key="8">
    <source>
    </source>
</evidence>
<evidence type="ECO:0000269" key="9">
    <source>
    </source>
</evidence>
<evidence type="ECO:0000269" key="10">
    <source>
    </source>
</evidence>
<evidence type="ECO:0000305" key="11"/>
<evidence type="ECO:0007829" key="12">
    <source>
        <dbReference type="PDB" id="5H8V"/>
    </source>
</evidence>
<evidence type="ECO:0007829" key="13">
    <source>
        <dbReference type="PDB" id="5H92"/>
    </source>
</evidence>
<keyword id="KW-0002">3D-structure</keyword>
<keyword id="KW-0004">4Fe-4S</keyword>
<keyword id="KW-0150">Chloroplast</keyword>
<keyword id="KW-0238">DNA-binding</keyword>
<keyword id="KW-0349">Heme</keyword>
<keyword id="KW-0408">Iron</keyword>
<keyword id="KW-0411">Iron-sulfur</keyword>
<keyword id="KW-0479">Metal-binding</keyword>
<keyword id="KW-0560">Oxidoreductase</keyword>
<keyword id="KW-0934">Plastid</keyword>
<keyword id="KW-1185">Reference proteome</keyword>
<keyword id="KW-0883">Thioether bond</keyword>
<keyword id="KW-0809">Transit peptide</keyword>
<sequence>MSGAIGGAEVHGFRGAAAQLPRSRVLGRPIRVAPPAAARPGGASAGSIRAVSAPAKKDASEVKRSKVEIIKEKSNFLRYPLNEELVSEAPNINESAVQLIKFHGSYQQTDRDVRGQKNYSFMLRTKNPCGKVPNQLYLAMDTLADEFGIGTLRLTTRQTFQLHGVLKKNLKTVLSTVIKNMGSTLGACGDLNRNVLAPAAPYVKKDILFAQQTAENIAALLTPQSGAYYDLWVDGEKIMSAEEPPEVTKARNDNSHGTNFPDSPEPIYGTQYLPRKFKVAVTAAGDNSVDILTNDIGVVVVSDDAGEPIGFNIYVGGGMGRTHRVETTFPRLADPLGYVPKEDILYAIKAIVVTQRENGRRDDRKYSRMKYMIDRWGIDRFRAEVEKYYGKKFESFRPLPEWQFNSYLGWQEQGDGKLFYGVHVDNGRVGGQAKKTLREIIEKYNLDVSITPNQNLILCGIDQAWREPITTALAQAGLLEPKDVDPLNLTAMACPALPLCPLAQTEAERGILPILKRIRAVFNKVGIKDSESVVVRITGCPNGCARPYMAELGFVGDGPKSYQIWLGGTPNQSTLAESFMDKVKLDDIEKVLEPLFTYWNGTRQEGESFGSFTNRTGFDKLKEVVNKWAESPSAA</sequence>
<dbReference type="EC" id="1.8.7.1" evidence="3 4"/>
<dbReference type="EMBL" id="D50679">
    <property type="protein sequence ID" value="BAA23641.1"/>
    <property type="molecule type" value="mRNA"/>
</dbReference>
<dbReference type="PIR" id="T01695">
    <property type="entry name" value="T01695"/>
</dbReference>
<dbReference type="PDB" id="5H8V">
    <property type="method" value="X-ray"/>
    <property type="resolution" value="2.20 A"/>
    <property type="chains" value="A/B=53-635"/>
</dbReference>
<dbReference type="PDB" id="5H8Y">
    <property type="method" value="X-ray"/>
    <property type="resolution" value="2.20 A"/>
    <property type="chains" value="A/B/C/D=53-635"/>
</dbReference>
<dbReference type="PDB" id="5H92">
    <property type="method" value="X-ray"/>
    <property type="resolution" value="2.08 A"/>
    <property type="chains" value="A/B=53-635"/>
</dbReference>
<dbReference type="PDBsum" id="5H8V"/>
<dbReference type="PDBsum" id="5H8Y"/>
<dbReference type="PDBsum" id="5H92"/>
<dbReference type="SMR" id="O23813"/>
<dbReference type="FunCoup" id="O23813">
    <property type="interactions" value="627"/>
</dbReference>
<dbReference type="STRING" id="4577.O23813"/>
<dbReference type="PaxDb" id="4577-GRMZM2G090338_P01"/>
<dbReference type="MaizeGDB" id="275273"/>
<dbReference type="eggNOG" id="KOG0560">
    <property type="taxonomic scope" value="Eukaryota"/>
</dbReference>
<dbReference type="InParanoid" id="O23813"/>
<dbReference type="BRENDA" id="1.8.7.1">
    <property type="organism ID" value="6752"/>
</dbReference>
<dbReference type="SABIO-RK" id="O23813"/>
<dbReference type="EvolutionaryTrace" id="O23813"/>
<dbReference type="Proteomes" id="UP000007305">
    <property type="component" value="Unplaced"/>
</dbReference>
<dbReference type="ExpressionAtlas" id="O23813">
    <property type="expression patterns" value="baseline and differential"/>
</dbReference>
<dbReference type="GO" id="GO:0042644">
    <property type="term" value="C:chloroplast nucleoid"/>
    <property type="evidence" value="ECO:0000314"/>
    <property type="project" value="UniProtKB"/>
</dbReference>
<dbReference type="GO" id="GO:0009570">
    <property type="term" value="C:chloroplast stroma"/>
    <property type="evidence" value="ECO:0000314"/>
    <property type="project" value="UniProtKB"/>
</dbReference>
<dbReference type="GO" id="GO:0051539">
    <property type="term" value="F:4 iron, 4 sulfur cluster binding"/>
    <property type="evidence" value="ECO:0007669"/>
    <property type="project" value="UniProtKB-KW"/>
</dbReference>
<dbReference type="GO" id="GO:0003677">
    <property type="term" value="F:DNA binding"/>
    <property type="evidence" value="ECO:0000314"/>
    <property type="project" value="UniProtKB"/>
</dbReference>
<dbReference type="GO" id="GO:0003690">
    <property type="term" value="F:double-stranded DNA binding"/>
    <property type="evidence" value="ECO:0000314"/>
    <property type="project" value="CAFA"/>
</dbReference>
<dbReference type="GO" id="GO:0020037">
    <property type="term" value="F:heme binding"/>
    <property type="evidence" value="ECO:0007669"/>
    <property type="project" value="InterPro"/>
</dbReference>
<dbReference type="GO" id="GO:0046872">
    <property type="term" value="F:metal ion binding"/>
    <property type="evidence" value="ECO:0007669"/>
    <property type="project" value="UniProtKB-KW"/>
</dbReference>
<dbReference type="GO" id="GO:0050311">
    <property type="term" value="F:sulfite reductase (ferredoxin) activity"/>
    <property type="evidence" value="ECO:0000314"/>
    <property type="project" value="UniProtKB"/>
</dbReference>
<dbReference type="GO" id="GO:0045892">
    <property type="term" value="P:negative regulation of DNA-templated transcription"/>
    <property type="evidence" value="ECO:0000314"/>
    <property type="project" value="CAFA"/>
</dbReference>
<dbReference type="GO" id="GO:1900160">
    <property type="term" value="P:plastid chromosome packaging"/>
    <property type="evidence" value="ECO:0000314"/>
    <property type="project" value="CAFA"/>
</dbReference>
<dbReference type="GO" id="GO:0000103">
    <property type="term" value="P:sulfate assimilation"/>
    <property type="evidence" value="ECO:0000318"/>
    <property type="project" value="GO_Central"/>
</dbReference>
<dbReference type="GO" id="GO:0019418">
    <property type="term" value="P:sulfide oxidation"/>
    <property type="evidence" value="ECO:0000250"/>
    <property type="project" value="UniProtKB"/>
</dbReference>
<dbReference type="FunFam" id="3.30.413.10:FF:000008">
    <property type="entry name" value="Sulfite reductase [ferredoxin], chloroplastic"/>
    <property type="match status" value="1"/>
</dbReference>
<dbReference type="FunFam" id="3.30.413.10:FF:000014">
    <property type="entry name" value="Sulfite reductase [ferredoxin], chloroplastic"/>
    <property type="match status" value="1"/>
</dbReference>
<dbReference type="FunFam" id="3.90.480.10:FF:000001">
    <property type="entry name" value="Sulfite reductase [ferredoxin], chloroplastic"/>
    <property type="match status" value="1"/>
</dbReference>
<dbReference type="Gene3D" id="3.30.413.10">
    <property type="entry name" value="Sulfite Reductase Hemoprotein, domain 1"/>
    <property type="match status" value="2"/>
</dbReference>
<dbReference type="Gene3D" id="3.90.480.10">
    <property type="entry name" value="Sulfite Reductase Hemoprotein,Domain 2"/>
    <property type="match status" value="1"/>
</dbReference>
<dbReference type="InterPro" id="IPR005117">
    <property type="entry name" value="NiRdtase/SiRdtase_haem-b_fer"/>
</dbReference>
<dbReference type="InterPro" id="IPR036136">
    <property type="entry name" value="Nit/Sulf_reduc_fer-like_dom_sf"/>
</dbReference>
<dbReference type="InterPro" id="IPR006067">
    <property type="entry name" value="NO2/SO3_Rdtase_4Fe4S_dom"/>
</dbReference>
<dbReference type="InterPro" id="IPR045169">
    <property type="entry name" value="NO2/SO3_Rdtase_4Fe4S_prot"/>
</dbReference>
<dbReference type="InterPro" id="IPR045854">
    <property type="entry name" value="NO2/SO3_Rdtase_4Fe4S_sf"/>
</dbReference>
<dbReference type="InterPro" id="IPR006066">
    <property type="entry name" value="NO2/SO3_Rdtase_FeS/sirohaem_BS"/>
</dbReference>
<dbReference type="InterPro" id="IPR011787">
    <property type="entry name" value="SiR_ferredoxin-dep"/>
</dbReference>
<dbReference type="NCBIfam" id="NF010029">
    <property type="entry name" value="PRK13504.1"/>
    <property type="match status" value="1"/>
</dbReference>
<dbReference type="NCBIfam" id="TIGR02042">
    <property type="entry name" value="sir"/>
    <property type="match status" value="1"/>
</dbReference>
<dbReference type="PANTHER" id="PTHR11493:SF47">
    <property type="entry name" value="SULFITE REDUCTASE [NADPH] SUBUNIT BETA"/>
    <property type="match status" value="1"/>
</dbReference>
<dbReference type="PANTHER" id="PTHR11493">
    <property type="entry name" value="SULFITE REDUCTASE [NADPH] SUBUNIT BETA-RELATED"/>
    <property type="match status" value="1"/>
</dbReference>
<dbReference type="Pfam" id="PF01077">
    <property type="entry name" value="NIR_SIR"/>
    <property type="match status" value="2"/>
</dbReference>
<dbReference type="Pfam" id="PF03460">
    <property type="entry name" value="NIR_SIR_ferr"/>
    <property type="match status" value="2"/>
</dbReference>
<dbReference type="PRINTS" id="PR00397">
    <property type="entry name" value="SIROHAEM"/>
</dbReference>
<dbReference type="SUPFAM" id="SSF56014">
    <property type="entry name" value="Nitrite and sulphite reductase 4Fe-4S domain-like"/>
    <property type="match status" value="2"/>
</dbReference>
<dbReference type="SUPFAM" id="SSF55124">
    <property type="entry name" value="Nitrite/Sulfite reductase N-terminal domain-like"/>
    <property type="match status" value="2"/>
</dbReference>
<dbReference type="PROSITE" id="PS00365">
    <property type="entry name" value="NIR_SIR"/>
    <property type="match status" value="1"/>
</dbReference>
<protein>
    <recommendedName>
        <fullName>Sulfite reductase [ferredoxin], chloroplastic</fullName>
        <shortName>ZmSiR</shortName>
        <ecNumber evidence="3 4">1.8.7.1</ecNumber>
    </recommendedName>
</protein>